<name>GUAA_STRP4</name>
<organism>
    <name type="scientific">Streptococcus pneumoniae serotype 19F (strain G54)</name>
    <dbReference type="NCBI Taxonomy" id="512566"/>
    <lineage>
        <taxon>Bacteria</taxon>
        <taxon>Bacillati</taxon>
        <taxon>Bacillota</taxon>
        <taxon>Bacilli</taxon>
        <taxon>Lactobacillales</taxon>
        <taxon>Streptococcaceae</taxon>
        <taxon>Streptococcus</taxon>
    </lineage>
</organism>
<reference key="1">
    <citation type="journal article" date="2001" name="Microb. Drug Resist.">
        <title>Annotated draft genomic sequence from a Streptococcus pneumoniae type 19F clinical isolate.</title>
        <authorList>
            <person name="Dopazo J."/>
            <person name="Mendoza A."/>
            <person name="Herrero J."/>
            <person name="Caldara F."/>
            <person name="Humbert Y."/>
            <person name="Friedli L."/>
            <person name="Guerrier M."/>
            <person name="Grand-Schenk E."/>
            <person name="Gandin C."/>
            <person name="de Francesco M."/>
            <person name="Polissi A."/>
            <person name="Buell G."/>
            <person name="Feger G."/>
            <person name="Garcia E."/>
            <person name="Peitsch M."/>
            <person name="Garcia-Bustos J.F."/>
        </authorList>
    </citation>
    <scope>NUCLEOTIDE SEQUENCE [LARGE SCALE GENOMIC DNA]</scope>
    <source>
        <strain>G54</strain>
    </source>
</reference>
<reference key="2">
    <citation type="submission" date="2008-03" db="EMBL/GenBank/DDBJ databases">
        <title>Pneumococcal beta glucoside metabolism investigated by whole genome comparison.</title>
        <authorList>
            <person name="Mulas L."/>
            <person name="Trappetti C."/>
            <person name="Hakenbeck R."/>
            <person name="Iannelli F."/>
            <person name="Pozzi G."/>
            <person name="Davidsen T.M."/>
            <person name="Tettelin H."/>
            <person name="Oggioni M."/>
        </authorList>
    </citation>
    <scope>NUCLEOTIDE SEQUENCE [LARGE SCALE GENOMIC DNA]</scope>
    <source>
        <strain>G54</strain>
    </source>
</reference>
<dbReference type="EC" id="6.3.5.2" evidence="1"/>
<dbReference type="EMBL" id="CP001015">
    <property type="protein sequence ID" value="ACF55281.1"/>
    <property type="molecule type" value="Genomic_DNA"/>
</dbReference>
<dbReference type="SMR" id="B5E5U0"/>
<dbReference type="MEROPS" id="C26.957"/>
<dbReference type="KEGG" id="spx:SPG_1373"/>
<dbReference type="HOGENOM" id="CLU_014340_0_5_9"/>
<dbReference type="UniPathway" id="UPA00189">
    <property type="reaction ID" value="UER00296"/>
</dbReference>
<dbReference type="GO" id="GO:0005829">
    <property type="term" value="C:cytosol"/>
    <property type="evidence" value="ECO:0007669"/>
    <property type="project" value="TreeGrafter"/>
</dbReference>
<dbReference type="GO" id="GO:0005524">
    <property type="term" value="F:ATP binding"/>
    <property type="evidence" value="ECO:0007669"/>
    <property type="project" value="UniProtKB-UniRule"/>
</dbReference>
<dbReference type="GO" id="GO:0003921">
    <property type="term" value="F:GMP synthase activity"/>
    <property type="evidence" value="ECO:0007669"/>
    <property type="project" value="InterPro"/>
</dbReference>
<dbReference type="CDD" id="cd01742">
    <property type="entry name" value="GATase1_GMP_Synthase"/>
    <property type="match status" value="1"/>
</dbReference>
<dbReference type="CDD" id="cd01997">
    <property type="entry name" value="GMP_synthase_C"/>
    <property type="match status" value="1"/>
</dbReference>
<dbReference type="FunFam" id="3.30.300.10:FF:000002">
    <property type="entry name" value="GMP synthase [glutamine-hydrolyzing]"/>
    <property type="match status" value="1"/>
</dbReference>
<dbReference type="FunFam" id="3.40.50.620:FF:000001">
    <property type="entry name" value="GMP synthase [glutamine-hydrolyzing]"/>
    <property type="match status" value="1"/>
</dbReference>
<dbReference type="FunFam" id="3.40.50.880:FF:000001">
    <property type="entry name" value="GMP synthase [glutamine-hydrolyzing]"/>
    <property type="match status" value="1"/>
</dbReference>
<dbReference type="Gene3D" id="3.30.300.10">
    <property type="match status" value="1"/>
</dbReference>
<dbReference type="Gene3D" id="3.40.50.880">
    <property type="match status" value="1"/>
</dbReference>
<dbReference type="Gene3D" id="3.40.50.620">
    <property type="entry name" value="HUPs"/>
    <property type="match status" value="1"/>
</dbReference>
<dbReference type="HAMAP" id="MF_00344">
    <property type="entry name" value="GMP_synthase"/>
    <property type="match status" value="1"/>
</dbReference>
<dbReference type="InterPro" id="IPR029062">
    <property type="entry name" value="Class_I_gatase-like"/>
</dbReference>
<dbReference type="InterPro" id="IPR017926">
    <property type="entry name" value="GATASE"/>
</dbReference>
<dbReference type="InterPro" id="IPR001674">
    <property type="entry name" value="GMP_synth_C"/>
</dbReference>
<dbReference type="InterPro" id="IPR004739">
    <property type="entry name" value="GMP_synth_GATase"/>
</dbReference>
<dbReference type="InterPro" id="IPR022955">
    <property type="entry name" value="GMP_synthase"/>
</dbReference>
<dbReference type="InterPro" id="IPR025777">
    <property type="entry name" value="GMPS_ATP_PPase_dom"/>
</dbReference>
<dbReference type="InterPro" id="IPR022310">
    <property type="entry name" value="NAD/GMP_synthase"/>
</dbReference>
<dbReference type="InterPro" id="IPR014729">
    <property type="entry name" value="Rossmann-like_a/b/a_fold"/>
</dbReference>
<dbReference type="NCBIfam" id="TIGR00884">
    <property type="entry name" value="guaA_Cterm"/>
    <property type="match status" value="1"/>
</dbReference>
<dbReference type="NCBIfam" id="TIGR00888">
    <property type="entry name" value="guaA_Nterm"/>
    <property type="match status" value="1"/>
</dbReference>
<dbReference type="NCBIfam" id="NF000848">
    <property type="entry name" value="PRK00074.1"/>
    <property type="match status" value="1"/>
</dbReference>
<dbReference type="PANTHER" id="PTHR11922:SF2">
    <property type="entry name" value="GMP SYNTHASE [GLUTAMINE-HYDROLYZING]"/>
    <property type="match status" value="1"/>
</dbReference>
<dbReference type="PANTHER" id="PTHR11922">
    <property type="entry name" value="GMP SYNTHASE-RELATED"/>
    <property type="match status" value="1"/>
</dbReference>
<dbReference type="Pfam" id="PF00117">
    <property type="entry name" value="GATase"/>
    <property type="match status" value="1"/>
</dbReference>
<dbReference type="Pfam" id="PF00958">
    <property type="entry name" value="GMP_synt_C"/>
    <property type="match status" value="1"/>
</dbReference>
<dbReference type="Pfam" id="PF02540">
    <property type="entry name" value="NAD_synthase"/>
    <property type="match status" value="1"/>
</dbReference>
<dbReference type="PRINTS" id="PR00097">
    <property type="entry name" value="ANTSNTHASEII"/>
</dbReference>
<dbReference type="PRINTS" id="PR00099">
    <property type="entry name" value="CPSGATASE"/>
</dbReference>
<dbReference type="PRINTS" id="PR00096">
    <property type="entry name" value="GATASE"/>
</dbReference>
<dbReference type="SUPFAM" id="SSF52402">
    <property type="entry name" value="Adenine nucleotide alpha hydrolases-like"/>
    <property type="match status" value="1"/>
</dbReference>
<dbReference type="SUPFAM" id="SSF52317">
    <property type="entry name" value="Class I glutamine amidotransferase-like"/>
    <property type="match status" value="1"/>
</dbReference>
<dbReference type="PROSITE" id="PS51273">
    <property type="entry name" value="GATASE_TYPE_1"/>
    <property type="match status" value="1"/>
</dbReference>
<dbReference type="PROSITE" id="PS51553">
    <property type="entry name" value="GMPS_ATP_PPASE"/>
    <property type="match status" value="1"/>
</dbReference>
<keyword id="KW-0067">ATP-binding</keyword>
<keyword id="KW-0315">Glutamine amidotransferase</keyword>
<keyword id="KW-0332">GMP biosynthesis</keyword>
<keyword id="KW-0436">Ligase</keyword>
<keyword id="KW-0547">Nucleotide-binding</keyword>
<keyword id="KW-0658">Purine biosynthesis</keyword>
<feature type="chain" id="PRO_1000120429" description="GMP synthase [glutamine-hydrolyzing]">
    <location>
        <begin position="1"/>
        <end position="520"/>
    </location>
</feature>
<feature type="domain" description="Glutamine amidotransferase type-1" evidence="1">
    <location>
        <begin position="13"/>
        <end position="205"/>
    </location>
</feature>
<feature type="domain" description="GMPS ATP-PPase" evidence="1">
    <location>
        <begin position="206"/>
        <end position="395"/>
    </location>
</feature>
<feature type="active site" description="Nucleophile" evidence="1">
    <location>
        <position position="90"/>
    </location>
</feature>
<feature type="active site" evidence="1">
    <location>
        <position position="179"/>
    </location>
</feature>
<feature type="active site" evidence="1">
    <location>
        <position position="181"/>
    </location>
</feature>
<feature type="binding site" evidence="1">
    <location>
        <begin position="233"/>
        <end position="239"/>
    </location>
    <ligand>
        <name>ATP</name>
        <dbReference type="ChEBI" id="CHEBI:30616"/>
    </ligand>
</feature>
<sequence>MSNISTDLQDVEKIIVLDYGSQYNQLISRRIREIGVFSELKSHKISAAEVREVNPVGIILSGGPNSVYEDGSFDIDPEIFELGIPILGICYGMQLLTHKLGGKVVPAGDAGNREYGQSTLTHTPSALFESTPDEQTVLMSHGDAVTEIPADFVRTGTSADCPYAAIENPDKHIYGIQFHPEVRHSVYGNDILRNFALNICKAKGDWSMDNFIDMQIKKIRETVGDKRVLLGLSGGVDSSVVGVLLQKAIGDQLICIFVDHGLLRKGEADQVMDMLGGKFGLNIVKADAAKRFLDKLAGVSDPEQKRKIIGNEFVYVFDDEASKLKDVKFLAQGTLYTDVIESGTDTAQTIKSHHNVGGLPEDMQFELIEPLNTLYKDEVRALGTELGMPDHIVWRQPFPGPGLAIRVMGEITEEKLETVRESDAILREEIAKAGLDRDIWQYFTVNTGVRSVGVMGDGRTYDYTIAIRAITSIDGMTADFAKIPWEVLQKISVRIVNEVDHVNRIVYDITSKPPATVEWE</sequence>
<gene>
    <name evidence="1" type="primary">guaA</name>
    <name type="ordered locus">SPG_1373</name>
</gene>
<proteinExistence type="inferred from homology"/>
<accession>B5E5U0</accession>
<protein>
    <recommendedName>
        <fullName evidence="1">GMP synthase [glutamine-hydrolyzing]</fullName>
        <ecNumber evidence="1">6.3.5.2</ecNumber>
    </recommendedName>
    <alternativeName>
        <fullName evidence="1">GMP synthetase</fullName>
    </alternativeName>
    <alternativeName>
        <fullName evidence="1">Glutamine amidotransferase</fullName>
    </alternativeName>
</protein>
<evidence type="ECO:0000255" key="1">
    <source>
        <dbReference type="HAMAP-Rule" id="MF_00344"/>
    </source>
</evidence>
<comment type="function">
    <text evidence="1">Catalyzes the synthesis of GMP from XMP.</text>
</comment>
<comment type="catalytic activity">
    <reaction evidence="1">
        <text>XMP + L-glutamine + ATP + H2O = GMP + L-glutamate + AMP + diphosphate + 2 H(+)</text>
        <dbReference type="Rhea" id="RHEA:11680"/>
        <dbReference type="ChEBI" id="CHEBI:15377"/>
        <dbReference type="ChEBI" id="CHEBI:15378"/>
        <dbReference type="ChEBI" id="CHEBI:29985"/>
        <dbReference type="ChEBI" id="CHEBI:30616"/>
        <dbReference type="ChEBI" id="CHEBI:33019"/>
        <dbReference type="ChEBI" id="CHEBI:57464"/>
        <dbReference type="ChEBI" id="CHEBI:58115"/>
        <dbReference type="ChEBI" id="CHEBI:58359"/>
        <dbReference type="ChEBI" id="CHEBI:456215"/>
        <dbReference type="EC" id="6.3.5.2"/>
    </reaction>
</comment>
<comment type="pathway">
    <text evidence="1">Purine metabolism; GMP biosynthesis; GMP from XMP (L-Gln route): step 1/1.</text>
</comment>
<comment type="subunit">
    <text evidence="1">Homodimer.</text>
</comment>